<evidence type="ECO:0000250" key="1">
    <source>
        <dbReference type="UniProtKB" id="Q8NB37"/>
    </source>
</evidence>
<evidence type="ECO:0000255" key="2"/>
<evidence type="ECO:0000305" key="3"/>
<reference key="1">
    <citation type="submission" date="2006-02" db="EMBL/GenBank/DDBJ databases">
        <authorList>
            <consortium name="NIH - Mammalian Gene Collection (MGC) project"/>
        </authorList>
    </citation>
    <scope>NUCLEOTIDE SEQUENCE [LARGE SCALE MRNA]</scope>
    <source>
        <strain>Hereford</strain>
        <tissue>Uterus</tissue>
    </source>
</reference>
<keyword id="KW-0967">Endosome</keyword>
<keyword id="KW-0325">Glycoprotein</keyword>
<keyword id="KW-1185">Reference proteome</keyword>
<keyword id="KW-0964">Secreted</keyword>
<keyword id="KW-0732">Signal</keyword>
<comment type="function">
    <text evidence="1">Component of the FERRY complex (Five-subunit Endosomal Rab5 and RNA/ribosome intermediary). The FERRY complex directly interacts with mRNAs and RAB5A, and functions as a RAB5A effector involved in the localization and the distribution of specific mRNAs most likely by mediating their endosomal transport. The complex recruits mRNAs and ribosomes to early endosomes through direct mRNA-interaction.</text>
</comment>
<comment type="subunit">
    <text evidence="1">Homotetramer. Component of the FERRY complex composed of five subunits, TBCK, PPP1R21, FERRY3, CRYZL1 and GATD1 with a ratio of 1:2:1:2:4, respectively.</text>
</comment>
<comment type="subcellular location">
    <subcellularLocation>
        <location evidence="1">Secreted</location>
    </subcellularLocation>
    <subcellularLocation>
        <location evidence="1">Early endosome</location>
    </subcellularLocation>
</comment>
<comment type="similarity">
    <text evidence="3">Belongs to the peptidase C56 family.</text>
</comment>
<accession>Q29RZ1</accession>
<feature type="signal peptide" evidence="2">
    <location>
        <begin position="1"/>
        <end position="35"/>
    </location>
</feature>
<feature type="chain" id="PRO_0000305093" description="Glutamine amidotransferase-like class 1 domain-containing protein 1">
    <location>
        <begin position="36"/>
        <end position="220"/>
    </location>
</feature>
<feature type="glycosylation site" description="N-linked (GlcNAc...) asparagine" evidence="2">
    <location>
        <position position="57"/>
    </location>
</feature>
<feature type="glycosylation site" description="N-linked (GlcNAc...) asparagine" evidence="2">
    <location>
        <position position="201"/>
    </location>
</feature>
<proteinExistence type="evidence at transcript level"/>
<name>GALD1_BOVIN</name>
<organism>
    <name type="scientific">Bos taurus</name>
    <name type="common">Bovine</name>
    <dbReference type="NCBI Taxonomy" id="9913"/>
    <lineage>
        <taxon>Eukaryota</taxon>
        <taxon>Metazoa</taxon>
        <taxon>Chordata</taxon>
        <taxon>Craniata</taxon>
        <taxon>Vertebrata</taxon>
        <taxon>Euteleostomi</taxon>
        <taxon>Mammalia</taxon>
        <taxon>Eutheria</taxon>
        <taxon>Laurasiatheria</taxon>
        <taxon>Artiodactyla</taxon>
        <taxon>Ruminantia</taxon>
        <taxon>Pecora</taxon>
        <taxon>Bovidae</taxon>
        <taxon>Bovinae</taxon>
        <taxon>Bos</taxon>
    </lineage>
</organism>
<sequence length="220" mass="23263">MASERLPSRPACLLVASGAAEGVSAQSFLHCFTLASAAFNLQVATPGGKTMDFVDVNESNARWVQDFRLKAYASPAKLESIDGARYHALLIPSCPGALVDLASSGSLARILQHFHSESKPICAVGHGVAALCCATSEDRSWVFQGYSVTGPSVYELVRAPGFAHLPLIVEDFVKDAGACFSASEPDAMHVVLDRHLVTGQNASSTVPAVQNLLFLCGSRK</sequence>
<dbReference type="EMBL" id="BC113324">
    <property type="protein sequence ID" value="AAI13325.1"/>
    <property type="molecule type" value="mRNA"/>
</dbReference>
<dbReference type="RefSeq" id="NP_001039612.1">
    <property type="nucleotide sequence ID" value="NM_001046147.1"/>
</dbReference>
<dbReference type="SMR" id="Q29RZ1"/>
<dbReference type="FunCoup" id="Q29RZ1">
    <property type="interactions" value="1804"/>
</dbReference>
<dbReference type="STRING" id="9913.ENSBTAP00000074410"/>
<dbReference type="GlyCosmos" id="Q29RZ1">
    <property type="glycosylation" value="2 sites, No reported glycans"/>
</dbReference>
<dbReference type="GlyGen" id="Q29RZ1">
    <property type="glycosylation" value="2 sites"/>
</dbReference>
<dbReference type="PaxDb" id="9913-ENSBTAP00000013662"/>
<dbReference type="GeneID" id="513454"/>
<dbReference type="KEGG" id="bta:513454"/>
<dbReference type="CTD" id="347862"/>
<dbReference type="VEuPathDB" id="HostDB:ENSBTAG00000010348"/>
<dbReference type="eggNOG" id="ENOG502QS6W">
    <property type="taxonomic scope" value="Eukaryota"/>
</dbReference>
<dbReference type="HOGENOM" id="CLU_098485_0_0_1"/>
<dbReference type="InParanoid" id="Q29RZ1"/>
<dbReference type="OMA" id="QKKPVCA"/>
<dbReference type="OrthoDB" id="543156at2759"/>
<dbReference type="TreeFam" id="TF328533"/>
<dbReference type="Proteomes" id="UP000009136">
    <property type="component" value="Chromosome 29"/>
</dbReference>
<dbReference type="Bgee" id="ENSBTAG00000010348">
    <property type="expression patterns" value="Expressed in retina and 105 other cell types or tissues"/>
</dbReference>
<dbReference type="GO" id="GO:0005737">
    <property type="term" value="C:cytoplasm"/>
    <property type="evidence" value="ECO:0000318"/>
    <property type="project" value="GO_Central"/>
</dbReference>
<dbReference type="GO" id="GO:0005769">
    <property type="term" value="C:early endosome"/>
    <property type="evidence" value="ECO:0007669"/>
    <property type="project" value="UniProtKB-SubCell"/>
</dbReference>
<dbReference type="GO" id="GO:0005576">
    <property type="term" value="C:extracellular region"/>
    <property type="evidence" value="ECO:0007669"/>
    <property type="project" value="UniProtKB-SubCell"/>
</dbReference>
<dbReference type="GO" id="GO:0019172">
    <property type="term" value="F:glyoxalase III activity"/>
    <property type="evidence" value="ECO:0000318"/>
    <property type="project" value="GO_Central"/>
</dbReference>
<dbReference type="GO" id="GO:0019243">
    <property type="term" value="P:methylglyoxal catabolic process to D-lactate via S-lactoyl-glutathione"/>
    <property type="evidence" value="ECO:0000318"/>
    <property type="project" value="GO_Central"/>
</dbReference>
<dbReference type="CDD" id="cd03141">
    <property type="entry name" value="GATase1_Hsp31_like"/>
    <property type="match status" value="1"/>
</dbReference>
<dbReference type="FunFam" id="3.40.50.880:FF:000045">
    <property type="entry name" value="glutamine amidotransferase-like class 1 domain-containing protein 1 isoform X2"/>
    <property type="match status" value="1"/>
</dbReference>
<dbReference type="Gene3D" id="3.40.50.880">
    <property type="match status" value="1"/>
</dbReference>
<dbReference type="InterPro" id="IPR029062">
    <property type="entry name" value="Class_I_gatase-like"/>
</dbReference>
<dbReference type="InterPro" id="IPR050325">
    <property type="entry name" value="Prot/Nucl_acid_deglycase"/>
</dbReference>
<dbReference type="PANTHER" id="PTHR48094:SF18">
    <property type="entry name" value="GLUTAMINE AMIDOTRANSFERASE-LIKE CLASS 1 DOMAIN-CONTAINING PROTEIN 1"/>
    <property type="match status" value="1"/>
</dbReference>
<dbReference type="PANTHER" id="PTHR48094">
    <property type="entry name" value="PROTEIN/NUCLEIC ACID DEGLYCASE DJ-1-RELATED"/>
    <property type="match status" value="1"/>
</dbReference>
<dbReference type="SUPFAM" id="SSF52317">
    <property type="entry name" value="Class I glutamine amidotransferase-like"/>
    <property type="match status" value="1"/>
</dbReference>
<gene>
    <name evidence="1" type="primary">GATD1</name>
    <name evidence="1" type="synonym">PDDC1</name>
</gene>
<protein>
    <recommendedName>
        <fullName evidence="1">Glutamine amidotransferase-like class 1 domain-containing protein 1</fullName>
    </recommendedName>
    <alternativeName>
        <fullName>Ferry endosomal RAB5 effector complex subunit 5</fullName>
        <shortName evidence="1">Fy-5</shortName>
    </alternativeName>
    <alternativeName>
        <fullName evidence="1">Parkinson disease 7 domain-containing protein 1</fullName>
    </alternativeName>
</protein>